<gene>
    <name evidence="1" type="primary">hemL</name>
    <name type="ordered locus">A9601_05391</name>
</gene>
<proteinExistence type="inferred from homology"/>
<evidence type="ECO:0000255" key="1">
    <source>
        <dbReference type="HAMAP-Rule" id="MF_00375"/>
    </source>
</evidence>
<organism>
    <name type="scientific">Prochlorococcus marinus (strain AS9601)</name>
    <dbReference type="NCBI Taxonomy" id="146891"/>
    <lineage>
        <taxon>Bacteria</taxon>
        <taxon>Bacillati</taxon>
        <taxon>Cyanobacteriota</taxon>
        <taxon>Cyanophyceae</taxon>
        <taxon>Synechococcales</taxon>
        <taxon>Prochlorococcaceae</taxon>
        <taxon>Prochlorococcus</taxon>
    </lineage>
</organism>
<sequence>MTDILNYTKSEEIFSAAQQLMPGGVSSPVRAFKSVGGQPIVFDRVKGPFAWDIDGNRYIDYIGSWGPAICGHAHPEVTTALQEAIEKGTSFGAPCVLENKLAEMVIDAVPSVEMVRFVNSGTEACMAVLRLMRAFTGRDKVIKFDGCYHGHADMFLVKAGSGVATLGLPDSPGVPRTTTANTLTAPYNDLEAVKKLFSENPDAISGVILEPIVGNAGFITPEPGFLEGLRELTTENGSLLVFDEVMTGFRISYGGAQEKFGVTPDLTTLGKVIGGGLPVGAYGGKKEIMSMVAPSGPVYQAGTLSGNPLAMTAGIKTLELLKQDGTYDKLDLITSRLIEGIIQSAENNGIAINGGSVSAMFGFFLCDGPVRNFNEAKTNDAELFGKLHKEMLRRGIYLAPSPFEAGFTSLAHSEEEIDKTIEAFDESFNAIKK</sequence>
<protein>
    <recommendedName>
        <fullName evidence="1">Glutamate-1-semialdehyde 2,1-aminomutase</fullName>
        <shortName evidence="1">GSA</shortName>
        <ecNumber evidence="1">5.4.3.8</ecNumber>
    </recommendedName>
    <alternativeName>
        <fullName evidence="1">Glutamate-1-semialdehyde aminotransferase</fullName>
        <shortName evidence="1">GSA-AT</shortName>
    </alternativeName>
</protein>
<comment type="catalytic activity">
    <reaction evidence="1">
        <text>(S)-4-amino-5-oxopentanoate = 5-aminolevulinate</text>
        <dbReference type="Rhea" id="RHEA:14265"/>
        <dbReference type="ChEBI" id="CHEBI:57501"/>
        <dbReference type="ChEBI" id="CHEBI:356416"/>
        <dbReference type="EC" id="5.4.3.8"/>
    </reaction>
</comment>
<comment type="cofactor">
    <cofactor evidence="1">
        <name>pyridoxal 5'-phosphate</name>
        <dbReference type="ChEBI" id="CHEBI:597326"/>
    </cofactor>
</comment>
<comment type="pathway">
    <text evidence="1">Porphyrin-containing compound metabolism; protoporphyrin-IX biosynthesis; 5-aminolevulinate from L-glutamyl-tRNA(Glu): step 2/2.</text>
</comment>
<comment type="pathway">
    <text evidence="1">Porphyrin-containing compound metabolism; chlorophyll biosynthesis.</text>
</comment>
<comment type="subunit">
    <text evidence="1">Homodimer.</text>
</comment>
<comment type="subcellular location">
    <subcellularLocation>
        <location evidence="1">Cytoplasm</location>
    </subcellularLocation>
</comment>
<comment type="similarity">
    <text evidence="1">Belongs to the class-III pyridoxal-phosphate-dependent aminotransferase family. HemL subfamily.</text>
</comment>
<feature type="chain" id="PRO_0000300932" description="Glutamate-1-semialdehyde 2,1-aminomutase">
    <location>
        <begin position="1"/>
        <end position="433"/>
    </location>
</feature>
<feature type="modified residue" description="N6-(pyridoxal phosphate)lysine" evidence="1">
    <location>
        <position position="271"/>
    </location>
</feature>
<accession>A2BPW6</accession>
<dbReference type="EC" id="5.4.3.8" evidence="1"/>
<dbReference type="EMBL" id="CP000551">
    <property type="protein sequence ID" value="ABM69827.1"/>
    <property type="molecule type" value="Genomic_DNA"/>
</dbReference>
<dbReference type="RefSeq" id="WP_011817993.1">
    <property type="nucleotide sequence ID" value="NC_008816.1"/>
</dbReference>
<dbReference type="SMR" id="A2BPW6"/>
<dbReference type="STRING" id="146891.A9601_05391"/>
<dbReference type="KEGG" id="pmb:A9601_05391"/>
<dbReference type="eggNOG" id="COG0001">
    <property type="taxonomic scope" value="Bacteria"/>
</dbReference>
<dbReference type="HOGENOM" id="CLU_016922_1_5_3"/>
<dbReference type="OrthoDB" id="9807885at2"/>
<dbReference type="UniPathway" id="UPA00251">
    <property type="reaction ID" value="UER00317"/>
</dbReference>
<dbReference type="UniPathway" id="UPA00668"/>
<dbReference type="Proteomes" id="UP000002590">
    <property type="component" value="Chromosome"/>
</dbReference>
<dbReference type="GO" id="GO:0005737">
    <property type="term" value="C:cytoplasm"/>
    <property type="evidence" value="ECO:0007669"/>
    <property type="project" value="UniProtKB-SubCell"/>
</dbReference>
<dbReference type="GO" id="GO:0042286">
    <property type="term" value="F:glutamate-1-semialdehyde 2,1-aminomutase activity"/>
    <property type="evidence" value="ECO:0007669"/>
    <property type="project" value="UniProtKB-UniRule"/>
</dbReference>
<dbReference type="GO" id="GO:0030170">
    <property type="term" value="F:pyridoxal phosphate binding"/>
    <property type="evidence" value="ECO:0007669"/>
    <property type="project" value="InterPro"/>
</dbReference>
<dbReference type="GO" id="GO:0008483">
    <property type="term" value="F:transaminase activity"/>
    <property type="evidence" value="ECO:0007669"/>
    <property type="project" value="InterPro"/>
</dbReference>
<dbReference type="GO" id="GO:0015995">
    <property type="term" value="P:chlorophyll biosynthetic process"/>
    <property type="evidence" value="ECO:0007669"/>
    <property type="project" value="UniProtKB-UniRule"/>
</dbReference>
<dbReference type="GO" id="GO:0006782">
    <property type="term" value="P:protoporphyrinogen IX biosynthetic process"/>
    <property type="evidence" value="ECO:0007669"/>
    <property type="project" value="UniProtKB-UniRule"/>
</dbReference>
<dbReference type="CDD" id="cd00610">
    <property type="entry name" value="OAT_like"/>
    <property type="match status" value="1"/>
</dbReference>
<dbReference type="FunFam" id="3.40.640.10:FF:000021">
    <property type="entry name" value="Glutamate-1-semialdehyde 2,1-aminomutase"/>
    <property type="match status" value="1"/>
</dbReference>
<dbReference type="Gene3D" id="3.90.1150.10">
    <property type="entry name" value="Aspartate Aminotransferase, domain 1"/>
    <property type="match status" value="1"/>
</dbReference>
<dbReference type="Gene3D" id="3.40.640.10">
    <property type="entry name" value="Type I PLP-dependent aspartate aminotransferase-like (Major domain)"/>
    <property type="match status" value="1"/>
</dbReference>
<dbReference type="HAMAP" id="MF_00375">
    <property type="entry name" value="HemL_aminotrans_3"/>
    <property type="match status" value="1"/>
</dbReference>
<dbReference type="InterPro" id="IPR004639">
    <property type="entry name" value="4pyrrol_synth_GluAld_NH2Trfase"/>
</dbReference>
<dbReference type="InterPro" id="IPR005814">
    <property type="entry name" value="Aminotrans_3"/>
</dbReference>
<dbReference type="InterPro" id="IPR049704">
    <property type="entry name" value="Aminotrans_3_PPA_site"/>
</dbReference>
<dbReference type="InterPro" id="IPR015424">
    <property type="entry name" value="PyrdxlP-dep_Trfase"/>
</dbReference>
<dbReference type="InterPro" id="IPR015421">
    <property type="entry name" value="PyrdxlP-dep_Trfase_major"/>
</dbReference>
<dbReference type="InterPro" id="IPR015422">
    <property type="entry name" value="PyrdxlP-dep_Trfase_small"/>
</dbReference>
<dbReference type="NCBIfam" id="TIGR00713">
    <property type="entry name" value="hemL"/>
    <property type="match status" value="1"/>
</dbReference>
<dbReference type="NCBIfam" id="NF000818">
    <property type="entry name" value="PRK00062.1"/>
    <property type="match status" value="1"/>
</dbReference>
<dbReference type="PANTHER" id="PTHR43713">
    <property type="entry name" value="GLUTAMATE-1-SEMIALDEHYDE 2,1-AMINOMUTASE"/>
    <property type="match status" value="1"/>
</dbReference>
<dbReference type="PANTHER" id="PTHR43713:SF3">
    <property type="entry name" value="GLUTAMATE-1-SEMIALDEHYDE 2,1-AMINOMUTASE 1, CHLOROPLASTIC-RELATED"/>
    <property type="match status" value="1"/>
</dbReference>
<dbReference type="Pfam" id="PF00202">
    <property type="entry name" value="Aminotran_3"/>
    <property type="match status" value="1"/>
</dbReference>
<dbReference type="SUPFAM" id="SSF53383">
    <property type="entry name" value="PLP-dependent transferases"/>
    <property type="match status" value="1"/>
</dbReference>
<dbReference type="PROSITE" id="PS00600">
    <property type="entry name" value="AA_TRANSFER_CLASS_3"/>
    <property type="match status" value="1"/>
</dbReference>
<name>GSA_PROMS</name>
<keyword id="KW-0149">Chlorophyll biosynthesis</keyword>
<keyword id="KW-0963">Cytoplasm</keyword>
<keyword id="KW-0413">Isomerase</keyword>
<keyword id="KW-0627">Porphyrin biosynthesis</keyword>
<keyword id="KW-0663">Pyridoxal phosphate</keyword>
<reference key="1">
    <citation type="journal article" date="2007" name="PLoS Genet.">
        <title>Patterns and implications of gene gain and loss in the evolution of Prochlorococcus.</title>
        <authorList>
            <person name="Kettler G.C."/>
            <person name="Martiny A.C."/>
            <person name="Huang K."/>
            <person name="Zucker J."/>
            <person name="Coleman M.L."/>
            <person name="Rodrigue S."/>
            <person name="Chen F."/>
            <person name="Lapidus A."/>
            <person name="Ferriera S."/>
            <person name="Johnson J."/>
            <person name="Steglich C."/>
            <person name="Church G.M."/>
            <person name="Richardson P."/>
            <person name="Chisholm S.W."/>
        </authorList>
    </citation>
    <scope>NUCLEOTIDE SEQUENCE [LARGE SCALE GENOMIC DNA]</scope>
    <source>
        <strain>AS9601</strain>
    </source>
</reference>